<reference key="1">
    <citation type="submission" date="2007-11" db="EMBL/GenBank/DDBJ databases">
        <title>Identification of single-nucleotide polymorphisms in coding sequences of genes in the SLA class III region by direct sequencing.</title>
        <authorList>
            <person name="Kim J.H."/>
            <person name="Jeon J.T."/>
        </authorList>
    </citation>
    <scope>NUCLEOTIDE SEQUENCE [MRNA]</scope>
</reference>
<reference key="2">
    <citation type="submission" date="2007-05" db="EMBL/GenBank/DDBJ databases">
        <authorList>
            <consortium name="Porcine genome sequencing project"/>
        </authorList>
    </citation>
    <scope>NUCLEOTIDE SEQUENCE [LARGE SCALE GENOMIC DNA]</scope>
</reference>
<protein>
    <recommendedName>
        <fullName>Heat shock 70 kDa protein 1-like</fullName>
        <shortName>Heat shock 70 kDa protein 1L</shortName>
    </recommendedName>
</protein>
<dbReference type="EMBL" id="EU282366">
    <property type="protein sequence ID" value="ABX82832.1"/>
    <property type="molecule type" value="mRNA"/>
</dbReference>
<dbReference type="EMBL" id="AL773559">
    <property type="protein sequence ID" value="CAN13334.1"/>
    <property type="molecule type" value="Genomic_DNA"/>
</dbReference>
<dbReference type="RefSeq" id="NP_001116600.1">
    <property type="nucleotide sequence ID" value="NM_001123128.1"/>
</dbReference>
<dbReference type="RefSeq" id="XP_020953619.1">
    <property type="nucleotide sequence ID" value="XM_021097960.1"/>
</dbReference>
<dbReference type="RefSeq" id="XP_020953620.1">
    <property type="nucleotide sequence ID" value="XM_021097961.1"/>
</dbReference>
<dbReference type="SMR" id="A5A8V7"/>
<dbReference type="FunCoup" id="A5A8V7">
    <property type="interactions" value="520"/>
</dbReference>
<dbReference type="STRING" id="9823.ENSSSCP00000020097"/>
<dbReference type="PeptideAtlas" id="A5A8V7"/>
<dbReference type="Ensembl" id="ENSSSCT00065012647.1">
    <property type="protein sequence ID" value="ENSSSCP00065005143.1"/>
    <property type="gene ID" value="ENSSSCG00065009517.1"/>
</dbReference>
<dbReference type="Ensembl" id="ENSSSCT00065012652.1">
    <property type="protein sequence ID" value="ENSSSCP00065005146.1"/>
    <property type="gene ID" value="ENSSSCG00065009517.1"/>
</dbReference>
<dbReference type="Ensembl" id="ENSSSCT00065012663.1">
    <property type="protein sequence ID" value="ENSSSCP00065005150.1"/>
    <property type="gene ID" value="ENSSSCG00065009517.1"/>
</dbReference>
<dbReference type="Ensembl" id="ENSSSCT00085020330">
    <property type="protein sequence ID" value="ENSSSCP00085013978"/>
    <property type="gene ID" value="ENSSSCG00085010906"/>
</dbReference>
<dbReference type="Ensembl" id="ENSSSCT00085020332">
    <property type="protein sequence ID" value="ENSSSCP00085013979"/>
    <property type="gene ID" value="ENSSSCG00085010906"/>
</dbReference>
<dbReference type="Ensembl" id="ENSSSCT00105038634">
    <property type="protein sequence ID" value="ENSSSCP00105026782"/>
    <property type="gene ID" value="ENSSSCG00105020254"/>
</dbReference>
<dbReference type="Ensembl" id="ENSSSCT00105038635">
    <property type="protein sequence ID" value="ENSSSCP00105026784"/>
    <property type="gene ID" value="ENSSSCG00105020254"/>
</dbReference>
<dbReference type="Ensembl" id="ENSSSCT00130035627">
    <property type="protein sequence ID" value="ENSSSCP00130024841"/>
    <property type="gene ID" value="ENSSSCG00130018277"/>
</dbReference>
<dbReference type="Ensembl" id="ENSSSCT00130035631">
    <property type="protein sequence ID" value="ENSSSCP00130018096"/>
    <property type="gene ID" value="ENSSSCG00130018277"/>
</dbReference>
<dbReference type="GeneID" id="100144518"/>
<dbReference type="KEGG" id="ssc:100144518"/>
<dbReference type="CTD" id="3305"/>
<dbReference type="InParanoid" id="A5A8V7"/>
<dbReference type="OMA" id="VCKPIVT"/>
<dbReference type="OrthoDB" id="2401965at2759"/>
<dbReference type="Reactome" id="R-SSC-3371453">
    <property type="pathway name" value="Regulation of HSF1-mediated heat shock response"/>
</dbReference>
<dbReference type="Reactome" id="R-SSC-3371497">
    <property type="pathway name" value="HSP90 chaperone cycle for steroid hormone receptors (SHR) in the presence of ligand"/>
</dbReference>
<dbReference type="Reactome" id="R-SSC-3371568">
    <property type="pathway name" value="Attenuation phase"/>
</dbReference>
<dbReference type="Reactome" id="R-SSC-3371571">
    <property type="pathway name" value="HSF1-dependent transactivation"/>
</dbReference>
<dbReference type="Reactome" id="R-SSC-9833482">
    <property type="pathway name" value="PKR-mediated signaling"/>
</dbReference>
<dbReference type="PRO" id="PR:A5A8V7"/>
<dbReference type="Proteomes" id="UP000008227">
    <property type="component" value="Chromosome 7"/>
</dbReference>
<dbReference type="Proteomes" id="UP000314985">
    <property type="component" value="Unplaced"/>
</dbReference>
<dbReference type="Proteomes" id="UP000694570">
    <property type="component" value="Unplaced"/>
</dbReference>
<dbReference type="Proteomes" id="UP000694571">
    <property type="component" value="Unplaced"/>
</dbReference>
<dbReference type="Proteomes" id="UP000694720">
    <property type="component" value="Unplaced"/>
</dbReference>
<dbReference type="Proteomes" id="UP000694722">
    <property type="component" value="Unplaced"/>
</dbReference>
<dbReference type="Proteomes" id="UP000694723">
    <property type="component" value="Unplaced"/>
</dbReference>
<dbReference type="Proteomes" id="UP000694724">
    <property type="component" value="Unplaced"/>
</dbReference>
<dbReference type="Proteomes" id="UP000694725">
    <property type="component" value="Unplaced"/>
</dbReference>
<dbReference type="Proteomes" id="UP000694726">
    <property type="component" value="Unplaced"/>
</dbReference>
<dbReference type="Proteomes" id="UP000694727">
    <property type="component" value="Unplaced"/>
</dbReference>
<dbReference type="Proteomes" id="UP000694728">
    <property type="component" value="Unplaced"/>
</dbReference>
<dbReference type="Bgee" id="ENSSSCG00000030368">
    <property type="expression patterns" value="Expressed in testis and 25 other cell types or tissues"/>
</dbReference>
<dbReference type="GO" id="GO:0044297">
    <property type="term" value="C:cell body"/>
    <property type="evidence" value="ECO:0007669"/>
    <property type="project" value="Ensembl"/>
</dbReference>
<dbReference type="GO" id="GO:0008180">
    <property type="term" value="C:COP9 signalosome"/>
    <property type="evidence" value="ECO:0007669"/>
    <property type="project" value="Ensembl"/>
</dbReference>
<dbReference type="GO" id="GO:0005737">
    <property type="term" value="C:cytoplasm"/>
    <property type="evidence" value="ECO:0000318"/>
    <property type="project" value="GO_Central"/>
</dbReference>
<dbReference type="GO" id="GO:0005829">
    <property type="term" value="C:cytosol"/>
    <property type="evidence" value="ECO:0000318"/>
    <property type="project" value="GO_Central"/>
</dbReference>
<dbReference type="GO" id="GO:0005634">
    <property type="term" value="C:nucleus"/>
    <property type="evidence" value="ECO:0000318"/>
    <property type="project" value="GO_Central"/>
</dbReference>
<dbReference type="GO" id="GO:0005886">
    <property type="term" value="C:plasma membrane"/>
    <property type="evidence" value="ECO:0000318"/>
    <property type="project" value="GO_Central"/>
</dbReference>
<dbReference type="GO" id="GO:0002199">
    <property type="term" value="C:zona pellucida receptor complex"/>
    <property type="evidence" value="ECO:0007669"/>
    <property type="project" value="Ensembl"/>
</dbReference>
<dbReference type="GO" id="GO:0005524">
    <property type="term" value="F:ATP binding"/>
    <property type="evidence" value="ECO:0007669"/>
    <property type="project" value="UniProtKB-KW"/>
</dbReference>
<dbReference type="GO" id="GO:0016887">
    <property type="term" value="F:ATP hydrolysis activity"/>
    <property type="evidence" value="ECO:0000318"/>
    <property type="project" value="GO_Central"/>
</dbReference>
<dbReference type="GO" id="GO:0140662">
    <property type="term" value="F:ATP-dependent protein folding chaperone"/>
    <property type="evidence" value="ECO:0007669"/>
    <property type="project" value="InterPro"/>
</dbReference>
<dbReference type="GO" id="GO:0031072">
    <property type="term" value="F:heat shock protein binding"/>
    <property type="evidence" value="ECO:0000318"/>
    <property type="project" value="GO_Central"/>
</dbReference>
<dbReference type="GO" id="GO:0044183">
    <property type="term" value="F:protein folding chaperone"/>
    <property type="evidence" value="ECO:0000318"/>
    <property type="project" value="GO_Central"/>
</dbReference>
<dbReference type="GO" id="GO:0031625">
    <property type="term" value="F:ubiquitin protein ligase binding"/>
    <property type="evidence" value="ECO:0007669"/>
    <property type="project" value="Ensembl"/>
</dbReference>
<dbReference type="GO" id="GO:0051082">
    <property type="term" value="F:unfolded protein binding"/>
    <property type="evidence" value="ECO:0007669"/>
    <property type="project" value="Ensembl"/>
</dbReference>
<dbReference type="GO" id="GO:0007339">
    <property type="term" value="P:binding of sperm to zona pellucida"/>
    <property type="evidence" value="ECO:0007669"/>
    <property type="project" value="Ensembl"/>
</dbReference>
<dbReference type="GO" id="GO:0051085">
    <property type="term" value="P:chaperone cofactor-dependent protein refolding"/>
    <property type="evidence" value="ECO:0000318"/>
    <property type="project" value="GO_Central"/>
</dbReference>
<dbReference type="GO" id="GO:1903955">
    <property type="term" value="P:positive regulation of protein targeting to mitochondrion"/>
    <property type="evidence" value="ECO:0007669"/>
    <property type="project" value="Ensembl"/>
</dbReference>
<dbReference type="GO" id="GO:0042026">
    <property type="term" value="P:protein refolding"/>
    <property type="evidence" value="ECO:0000318"/>
    <property type="project" value="GO_Central"/>
</dbReference>
<dbReference type="CDD" id="cd10233">
    <property type="entry name" value="ASKHA_NBD_HSP70_HSPA1"/>
    <property type="match status" value="1"/>
</dbReference>
<dbReference type="FunFam" id="2.60.34.10:FF:000002">
    <property type="entry name" value="Heat shock 70 kDa"/>
    <property type="match status" value="1"/>
</dbReference>
<dbReference type="FunFam" id="3.30.420.40:FF:000172">
    <property type="entry name" value="Heat shock 70 kDa protein"/>
    <property type="match status" value="1"/>
</dbReference>
<dbReference type="FunFam" id="1.20.1270.10:FF:000019">
    <property type="entry name" value="Heat shock 70 kDa protein 1-like"/>
    <property type="match status" value="1"/>
</dbReference>
<dbReference type="FunFam" id="3.30.30.30:FF:000001">
    <property type="entry name" value="heat shock 70 kDa protein-like"/>
    <property type="match status" value="1"/>
</dbReference>
<dbReference type="FunFam" id="3.30.420.40:FF:000028">
    <property type="entry name" value="heat shock 70 kDa protein-like"/>
    <property type="match status" value="1"/>
</dbReference>
<dbReference type="FunFam" id="3.30.420.40:FF:000135">
    <property type="entry name" value="Heat shock cognate 71 kDa protein"/>
    <property type="match status" value="1"/>
</dbReference>
<dbReference type="FunFam" id="3.90.640.10:FF:000134">
    <property type="entry name" value="Heat shock cognate 71 kDa protein"/>
    <property type="match status" value="1"/>
</dbReference>
<dbReference type="FunFam" id="3.30.420.40:FF:000026">
    <property type="entry name" value="Heat shock protein 70"/>
    <property type="match status" value="1"/>
</dbReference>
<dbReference type="Gene3D" id="1.20.1270.10">
    <property type="match status" value="1"/>
</dbReference>
<dbReference type="Gene3D" id="3.30.30.30">
    <property type="match status" value="1"/>
</dbReference>
<dbReference type="Gene3D" id="3.30.420.40">
    <property type="match status" value="2"/>
</dbReference>
<dbReference type="Gene3D" id="3.90.640.10">
    <property type="entry name" value="Actin, Chain A, domain 4"/>
    <property type="match status" value="1"/>
</dbReference>
<dbReference type="Gene3D" id="2.60.34.10">
    <property type="entry name" value="Substrate Binding Domain Of DNAk, Chain A, domain 1"/>
    <property type="match status" value="1"/>
</dbReference>
<dbReference type="InterPro" id="IPR043129">
    <property type="entry name" value="ATPase_NBD"/>
</dbReference>
<dbReference type="InterPro" id="IPR018181">
    <property type="entry name" value="Heat_shock_70_CS"/>
</dbReference>
<dbReference type="InterPro" id="IPR029048">
    <property type="entry name" value="HSP70_C_sf"/>
</dbReference>
<dbReference type="InterPro" id="IPR029047">
    <property type="entry name" value="HSP70_peptide-bd_sf"/>
</dbReference>
<dbReference type="InterPro" id="IPR013126">
    <property type="entry name" value="Hsp_70_fam"/>
</dbReference>
<dbReference type="NCBIfam" id="NF001413">
    <property type="entry name" value="PRK00290.1"/>
    <property type="match status" value="1"/>
</dbReference>
<dbReference type="PANTHER" id="PTHR19375">
    <property type="entry name" value="HEAT SHOCK PROTEIN 70KDA"/>
    <property type="match status" value="1"/>
</dbReference>
<dbReference type="Pfam" id="PF00012">
    <property type="entry name" value="HSP70"/>
    <property type="match status" value="1"/>
</dbReference>
<dbReference type="PRINTS" id="PR00301">
    <property type="entry name" value="HEATSHOCK70"/>
</dbReference>
<dbReference type="SUPFAM" id="SSF53067">
    <property type="entry name" value="Actin-like ATPase domain"/>
    <property type="match status" value="2"/>
</dbReference>
<dbReference type="SUPFAM" id="SSF100934">
    <property type="entry name" value="Heat shock protein 70kD (HSP70), C-terminal subdomain"/>
    <property type="match status" value="1"/>
</dbReference>
<dbReference type="SUPFAM" id="SSF100920">
    <property type="entry name" value="Heat shock protein 70kD (HSP70), peptide-binding domain"/>
    <property type="match status" value="1"/>
</dbReference>
<dbReference type="PROSITE" id="PS00297">
    <property type="entry name" value="HSP70_1"/>
    <property type="match status" value="1"/>
</dbReference>
<dbReference type="PROSITE" id="PS00329">
    <property type="entry name" value="HSP70_2"/>
    <property type="match status" value="1"/>
</dbReference>
<dbReference type="PROSITE" id="PS01036">
    <property type="entry name" value="HSP70_3"/>
    <property type="match status" value="1"/>
</dbReference>
<keyword id="KW-0067">ATP-binding</keyword>
<keyword id="KW-0143">Chaperone</keyword>
<keyword id="KW-0547">Nucleotide-binding</keyword>
<keyword id="KW-1185">Reference proteome</keyword>
<keyword id="KW-0346">Stress response</keyword>
<feature type="chain" id="PRO_0000383117" description="Heat shock 70 kDa protein 1-like">
    <location>
        <begin position="1"/>
        <end position="641"/>
    </location>
</feature>
<feature type="region of interest" description="Nucleotide-binding domain (NBD)" evidence="2">
    <location>
        <begin position="3"/>
        <end position="388"/>
    </location>
</feature>
<feature type="region of interest" description="Substrate-binding domain (SBD)" evidence="2">
    <location>
        <begin position="396"/>
        <end position="511"/>
    </location>
</feature>
<feature type="binding site" evidence="1">
    <location>
        <begin position="14"/>
        <end position="17"/>
    </location>
    <ligand>
        <name>ATP</name>
        <dbReference type="ChEBI" id="CHEBI:30616"/>
    </ligand>
</feature>
<feature type="binding site" evidence="1">
    <location>
        <position position="73"/>
    </location>
    <ligand>
        <name>ATP</name>
        <dbReference type="ChEBI" id="CHEBI:30616"/>
    </ligand>
</feature>
<feature type="binding site" evidence="1">
    <location>
        <begin position="204"/>
        <end position="206"/>
    </location>
    <ligand>
        <name>ATP</name>
        <dbReference type="ChEBI" id="CHEBI:30616"/>
    </ligand>
</feature>
<feature type="binding site" evidence="1">
    <location>
        <begin position="270"/>
        <end position="277"/>
    </location>
    <ligand>
        <name>ATP</name>
        <dbReference type="ChEBI" id="CHEBI:30616"/>
    </ligand>
</feature>
<feature type="binding site" evidence="1">
    <location>
        <begin position="341"/>
        <end position="344"/>
    </location>
    <ligand>
        <name>ATP</name>
        <dbReference type="ChEBI" id="CHEBI:30616"/>
    </ligand>
</feature>
<feature type="sequence conflict" description="In Ref. 1; ABX82832." evidence="4" ref="1">
    <original>H</original>
    <variation>P</variation>
    <location>
        <position position="251"/>
    </location>
</feature>
<name>HS71L_PIG</name>
<sequence>MAAAKGTAIGIDLGTTYSCVGVFQHGKVEIIANDQGNRTTPSYVAFTDTERLIGDAAKNQVAMNPQNTVFDAKRLIGRKFNDPVVQSDMKLWPFQVINEGGKPKVMVSYKGEKKAFYPEEISSMVLTKMKETAEAFLGYTVTNAVITVPAYFNDSQRQATKDAGVIAGLNVLRIINEPTAAAIAYGLDKAGQGERHVLIFDLGGGTFDVSILTIDDGIFEVKATAGDTHLGGEDFDNRLVSHFVEEFKRKHKKDISQNKRAVRRLRTACERAKRTLSSSTQANLEIDSLYEGIDFYTSITRARFEELCADLFRGTLEPVEKALRDAKMDKAKIHDIVLVGGSTRIPKVQRLLQDYFNGRDLNKSINPDEAVAYGAAVQAAILMGDKSEKVQDLLLLDVAPLSLGLETAGGVMTVLIKRNSTIPTKQTQIFTTYSDNQPGVLIQVYEGERAMTRDNNLLGRFDLTGIPPAPRGVPQIEVTFDIDANGILNVTATDKSTGKANKITITNDKGRLSKEEIERMVLDAEKYKAEDEVQREKIAAKNALESYAFNMKSAVSDEGLKGKISDADKKKILNKCNEALSWLEANQLAEKDEFDHKRRELEQVCNPIITKLYQGGCTGPSCGTGYTPGRAATGPTIEEVD</sequence>
<accession>A5A8V7</accession>
<accession>B9TSS5</accession>
<proteinExistence type="evidence at transcript level"/>
<evidence type="ECO:0000250" key="1"/>
<evidence type="ECO:0000250" key="2">
    <source>
        <dbReference type="UniProtKB" id="P11142"/>
    </source>
</evidence>
<evidence type="ECO:0000250" key="3">
    <source>
        <dbReference type="UniProtKB" id="P34931"/>
    </source>
</evidence>
<evidence type="ECO:0000305" key="4"/>
<organism>
    <name type="scientific">Sus scrofa</name>
    <name type="common">Pig</name>
    <dbReference type="NCBI Taxonomy" id="9823"/>
    <lineage>
        <taxon>Eukaryota</taxon>
        <taxon>Metazoa</taxon>
        <taxon>Chordata</taxon>
        <taxon>Craniata</taxon>
        <taxon>Vertebrata</taxon>
        <taxon>Euteleostomi</taxon>
        <taxon>Mammalia</taxon>
        <taxon>Eutheria</taxon>
        <taxon>Laurasiatheria</taxon>
        <taxon>Artiodactyla</taxon>
        <taxon>Suina</taxon>
        <taxon>Suidae</taxon>
        <taxon>Sus</taxon>
    </lineage>
</organism>
<gene>
    <name type="primary">HSPA1L</name>
</gene>
<comment type="function">
    <text evidence="3">Molecular chaperone implicated in a wide variety of cellular processes, including protection of the proteome from stress, folding and transport of newly synthesized polypeptides, activation of proteolysis of misfolded proteins and the formation and dissociation of protein complexes. Plays a pivotal role in the protein quality control system, ensuring the correct folding of proteins, the re-folding of misfolded proteins and controlling the targeting of proteins for subsequent degradation. This is achieved through cycles of ATP binding, ATP hydrolysis and ADP release, mediated by co-chaperones. The affinity for polypeptides is regulated by its nucleotide bound state. In the ATP-bound form, it has a low affinity for substrate proteins. However, upon hydrolysis of the ATP to ADP, it undergoes a conformational change that increases its affinity for substrate proteins. It goes through repeated cycles of ATP hydrolysis and nucleotide exchange, which permits cycles of substrate binding and release. Positive regulator of PRKN translocation to damaged mitochondria.</text>
</comment>
<comment type="subunit">
    <text evidence="3">Interacts with PRKN.</text>
</comment>
<comment type="domain">
    <text evidence="3">The N-terminal nucleotide binding domain (NBD) (also known as the ATPase domain) is responsible for binding and hydrolyzing ATP. The C-terminal substrate-binding domain (SBD) (also known as peptide-binding domain) binds to the client/substrate proteins. The two domains are allosterically coupled so that, when ATP is bound to the NBD, the SBD binds relatively weakly to clients. When ADP is bound in the NBD, a conformational change enhances the affinity of the SBD for client proteins.</text>
</comment>
<comment type="similarity">
    <text evidence="4">Belongs to the heat shock protein 70 family.</text>
</comment>